<gene>
    <name evidence="1" type="primary">mltF</name>
    <name type="ordered locus">PSPA7_1353</name>
</gene>
<protein>
    <recommendedName>
        <fullName evidence="1">Membrane-bound lytic murein transglycosylase F</fullName>
        <ecNumber evidence="1">4.2.2.n1</ecNumber>
    </recommendedName>
    <alternativeName>
        <fullName evidence="1">Murein lyase F</fullName>
    </alternativeName>
</protein>
<proteinExistence type="inferred from homology"/>
<dbReference type="EC" id="4.2.2.n1" evidence="1"/>
<dbReference type="EMBL" id="CP000744">
    <property type="protein sequence ID" value="ABR80890.1"/>
    <property type="molecule type" value="Genomic_DNA"/>
</dbReference>
<dbReference type="RefSeq" id="WP_012074597.1">
    <property type="nucleotide sequence ID" value="NC_009656.1"/>
</dbReference>
<dbReference type="SMR" id="A6V102"/>
<dbReference type="CAZy" id="GH23">
    <property type="family name" value="Glycoside Hydrolase Family 23"/>
</dbReference>
<dbReference type="GeneID" id="77219741"/>
<dbReference type="KEGG" id="pap:PSPA7_1353"/>
<dbReference type="HOGENOM" id="CLU_027494_0_1_6"/>
<dbReference type="Proteomes" id="UP000001582">
    <property type="component" value="Chromosome"/>
</dbReference>
<dbReference type="GO" id="GO:0009279">
    <property type="term" value="C:cell outer membrane"/>
    <property type="evidence" value="ECO:0007669"/>
    <property type="project" value="UniProtKB-SubCell"/>
</dbReference>
<dbReference type="GO" id="GO:0008933">
    <property type="term" value="F:peptidoglycan lytic transglycosylase activity"/>
    <property type="evidence" value="ECO:0007669"/>
    <property type="project" value="UniProtKB-UniRule"/>
</dbReference>
<dbReference type="GO" id="GO:0016998">
    <property type="term" value="P:cell wall macromolecule catabolic process"/>
    <property type="evidence" value="ECO:0007669"/>
    <property type="project" value="UniProtKB-UniRule"/>
</dbReference>
<dbReference type="GO" id="GO:0071555">
    <property type="term" value="P:cell wall organization"/>
    <property type="evidence" value="ECO:0007669"/>
    <property type="project" value="UniProtKB-KW"/>
</dbReference>
<dbReference type="GO" id="GO:0009253">
    <property type="term" value="P:peptidoglycan catabolic process"/>
    <property type="evidence" value="ECO:0007669"/>
    <property type="project" value="TreeGrafter"/>
</dbReference>
<dbReference type="CDD" id="cd13403">
    <property type="entry name" value="MLTF-like"/>
    <property type="match status" value="1"/>
</dbReference>
<dbReference type="CDD" id="cd01009">
    <property type="entry name" value="PBP2_YfhD_N"/>
    <property type="match status" value="1"/>
</dbReference>
<dbReference type="Gene3D" id="1.10.530.10">
    <property type="match status" value="1"/>
</dbReference>
<dbReference type="Gene3D" id="3.40.190.10">
    <property type="entry name" value="Periplasmic binding protein-like II"/>
    <property type="match status" value="2"/>
</dbReference>
<dbReference type="HAMAP" id="MF_02016">
    <property type="entry name" value="MltF"/>
    <property type="match status" value="1"/>
</dbReference>
<dbReference type="InterPro" id="IPR023346">
    <property type="entry name" value="Lysozyme-like_dom_sf"/>
</dbReference>
<dbReference type="InterPro" id="IPR023703">
    <property type="entry name" value="MltF"/>
</dbReference>
<dbReference type="InterPro" id="IPR001638">
    <property type="entry name" value="Solute-binding_3/MltF_N"/>
</dbReference>
<dbReference type="InterPro" id="IPR000189">
    <property type="entry name" value="Transglyc_AS"/>
</dbReference>
<dbReference type="InterPro" id="IPR008258">
    <property type="entry name" value="Transglycosylase_SLT_dom_1"/>
</dbReference>
<dbReference type="NCBIfam" id="NF008112">
    <property type="entry name" value="PRK10859.1"/>
    <property type="match status" value="1"/>
</dbReference>
<dbReference type="PANTHER" id="PTHR35936">
    <property type="entry name" value="MEMBRANE-BOUND LYTIC MUREIN TRANSGLYCOSYLASE F"/>
    <property type="match status" value="1"/>
</dbReference>
<dbReference type="PANTHER" id="PTHR35936:SF32">
    <property type="entry name" value="MEMBRANE-BOUND LYTIC MUREIN TRANSGLYCOSYLASE F"/>
    <property type="match status" value="1"/>
</dbReference>
<dbReference type="Pfam" id="PF00497">
    <property type="entry name" value="SBP_bac_3"/>
    <property type="match status" value="1"/>
</dbReference>
<dbReference type="Pfam" id="PF01464">
    <property type="entry name" value="SLT"/>
    <property type="match status" value="1"/>
</dbReference>
<dbReference type="SMART" id="SM00062">
    <property type="entry name" value="PBPb"/>
    <property type="match status" value="1"/>
</dbReference>
<dbReference type="SUPFAM" id="SSF53955">
    <property type="entry name" value="Lysozyme-like"/>
    <property type="match status" value="1"/>
</dbReference>
<dbReference type="SUPFAM" id="SSF53850">
    <property type="entry name" value="Periplasmic binding protein-like II"/>
    <property type="match status" value="1"/>
</dbReference>
<dbReference type="PROSITE" id="PS00922">
    <property type="entry name" value="TRANSGLYCOSYLASE"/>
    <property type="match status" value="1"/>
</dbReference>
<comment type="function">
    <text evidence="1">Murein-degrading enzyme that degrades murein glycan strands and insoluble, high-molecular weight murein sacculi, with the concomitant formation of a 1,6-anhydromuramoyl product. Lytic transglycosylases (LTs) play an integral role in the metabolism of the peptidoglycan (PG) sacculus. Their lytic action creates space within the PG sacculus to allow for its expansion as well as for the insertion of various structures such as secretion systems and flagella.</text>
</comment>
<comment type="catalytic activity">
    <reaction evidence="1">
        <text>Exolytic cleavage of the (1-&gt;4)-beta-glycosidic linkage between N-acetylmuramic acid (MurNAc) and N-acetylglucosamine (GlcNAc) residues in peptidoglycan, from either the reducing or the non-reducing ends of the peptidoglycan chains, with concomitant formation of a 1,6-anhydrobond in the MurNAc residue.</text>
        <dbReference type="EC" id="4.2.2.n1"/>
    </reaction>
</comment>
<comment type="subcellular location">
    <subcellularLocation>
        <location>Cell outer membrane</location>
        <topology>Peripheral membrane protein</topology>
    </subcellularLocation>
    <text evidence="1">Attached to the inner leaflet of the outer membrane.</text>
</comment>
<comment type="domain">
    <text evidence="1">The N-terminal domain does not have lytic activity and probably modulates enzymatic activity. The C-terminal domain is the catalytic active domain.</text>
</comment>
<comment type="similarity">
    <text evidence="1">In the N-terminal section; belongs to the bacterial solute-binding protein 3 family.</text>
</comment>
<comment type="similarity">
    <text evidence="1">In the C-terminal section; belongs to the transglycosylase Slt family.</text>
</comment>
<reference key="1">
    <citation type="submission" date="2007-06" db="EMBL/GenBank/DDBJ databases">
        <authorList>
            <person name="Dodson R.J."/>
            <person name="Harkins D."/>
            <person name="Paulsen I.T."/>
        </authorList>
    </citation>
    <scope>NUCLEOTIDE SEQUENCE [LARGE SCALE GENOMIC DNA]</scope>
    <source>
        <strain>DSM 24068 / PA7</strain>
    </source>
</reference>
<evidence type="ECO:0000255" key="1">
    <source>
        <dbReference type="HAMAP-Rule" id="MF_02016"/>
    </source>
</evidence>
<evidence type="ECO:0000256" key="2">
    <source>
        <dbReference type="SAM" id="MobiDB-lite"/>
    </source>
</evidence>
<sequence>MFALTAYRLRCAAWLLATGIFLLLAGCSEAKAPTALERVQKEGVLRVVTRNSPATYFQDRNGETGFEYELAKRFAERLGVELKIETADNLDDLYAQLSRAGGPALAAAGLTPGRQDDASVRYSHTYLDVTPQVIYRNGQQRPTRPEDLVGKRIMVLKGSSHAAQLAELKKQYPELKYDESDAVEVVDLLRMVDVGDIDLTLVDSNELAMNQVYFPNVRVAFDFGEARGLAWALPGGDDDSLMNEVNAFLDQAKKEGLLQRLKDRYYGHVDVLGYVGAYTFAQHLQQRLPRYESHFKQSGKQLDTDWRLLAAIGYQESLWQPSATSKTGVRGLMMLTNRTAQAMGVSNRLDPKQSIQGGSKYFVQIRSELPESIREPDRSWFALAAYNIGGAHLEDARKMAEKEGLNPNKWLDVKKMLPRLAQKRWYAKTRYGYARGGETVHFVQNVRRYYDILTWVTQPQMEGSQIAESGLHLPGVNKTRPDDDEGDGKL</sequence>
<keyword id="KW-0998">Cell outer membrane</keyword>
<keyword id="KW-0961">Cell wall biogenesis/degradation</keyword>
<keyword id="KW-0456">Lyase</keyword>
<keyword id="KW-0472">Membrane</keyword>
<keyword id="KW-0732">Signal</keyword>
<feature type="signal peptide" evidence="1">
    <location>
        <begin position="1"/>
        <end position="32"/>
    </location>
</feature>
<feature type="chain" id="PRO_0000353955" description="Membrane-bound lytic murein transglycosylase F">
    <location>
        <begin position="33"/>
        <end position="490"/>
    </location>
</feature>
<feature type="region of interest" description="Non-LT domain" evidence="1">
    <location>
        <begin position="33"/>
        <end position="269"/>
    </location>
</feature>
<feature type="region of interest" description="LT domain" evidence="1">
    <location>
        <begin position="270"/>
        <end position="490"/>
    </location>
</feature>
<feature type="region of interest" description="Disordered" evidence="2">
    <location>
        <begin position="467"/>
        <end position="490"/>
    </location>
</feature>
<feature type="active site" evidence="1">
    <location>
        <position position="316"/>
    </location>
</feature>
<organism>
    <name type="scientific">Pseudomonas paraeruginosa (strain DSM 24068 / PA7)</name>
    <name type="common">Pseudomonas aeruginosa (strain PA7)</name>
    <dbReference type="NCBI Taxonomy" id="381754"/>
    <lineage>
        <taxon>Bacteria</taxon>
        <taxon>Pseudomonadati</taxon>
        <taxon>Pseudomonadota</taxon>
        <taxon>Gammaproteobacteria</taxon>
        <taxon>Pseudomonadales</taxon>
        <taxon>Pseudomonadaceae</taxon>
        <taxon>Pseudomonas</taxon>
        <taxon>Pseudomonas paraeruginosa</taxon>
    </lineage>
</organism>
<name>MLTF_PSEP7</name>
<accession>A6V102</accession>